<gene>
    <name type="primary">BPM6</name>
    <name type="ordered locus">At3g43700</name>
    <name type="ORF">F23N14_80</name>
</gene>
<reference key="1">
    <citation type="journal article" date="2000" name="Nature">
        <title>Sequence and analysis of chromosome 3 of the plant Arabidopsis thaliana.</title>
        <authorList>
            <person name="Salanoubat M."/>
            <person name="Lemcke K."/>
            <person name="Rieger M."/>
            <person name="Ansorge W."/>
            <person name="Unseld M."/>
            <person name="Fartmann B."/>
            <person name="Valle G."/>
            <person name="Bloecker H."/>
            <person name="Perez-Alonso M."/>
            <person name="Obermaier B."/>
            <person name="Delseny M."/>
            <person name="Boutry M."/>
            <person name="Grivell L.A."/>
            <person name="Mache R."/>
            <person name="Puigdomenech P."/>
            <person name="De Simone V."/>
            <person name="Choisne N."/>
            <person name="Artiguenave F."/>
            <person name="Robert C."/>
            <person name="Brottier P."/>
            <person name="Wincker P."/>
            <person name="Cattolico L."/>
            <person name="Weissenbach J."/>
            <person name="Saurin W."/>
            <person name="Quetier F."/>
            <person name="Schaefer M."/>
            <person name="Mueller-Auer S."/>
            <person name="Gabel C."/>
            <person name="Fuchs M."/>
            <person name="Benes V."/>
            <person name="Wurmbach E."/>
            <person name="Drzonek H."/>
            <person name="Erfle H."/>
            <person name="Jordan N."/>
            <person name="Bangert S."/>
            <person name="Wiedelmann R."/>
            <person name="Kranz H."/>
            <person name="Voss H."/>
            <person name="Holland R."/>
            <person name="Brandt P."/>
            <person name="Nyakatura G."/>
            <person name="Vezzi A."/>
            <person name="D'Angelo M."/>
            <person name="Pallavicini A."/>
            <person name="Toppo S."/>
            <person name="Simionati B."/>
            <person name="Conrad A."/>
            <person name="Hornischer K."/>
            <person name="Kauer G."/>
            <person name="Loehnert T.-H."/>
            <person name="Nordsiek G."/>
            <person name="Reichelt J."/>
            <person name="Scharfe M."/>
            <person name="Schoen O."/>
            <person name="Bargues M."/>
            <person name="Terol J."/>
            <person name="Climent J."/>
            <person name="Navarro P."/>
            <person name="Collado C."/>
            <person name="Perez-Perez A."/>
            <person name="Ottenwaelder B."/>
            <person name="Duchemin D."/>
            <person name="Cooke R."/>
            <person name="Laudie M."/>
            <person name="Berger-Llauro C."/>
            <person name="Purnelle B."/>
            <person name="Masuy D."/>
            <person name="de Haan M."/>
            <person name="Maarse A.C."/>
            <person name="Alcaraz J.-P."/>
            <person name="Cottet A."/>
            <person name="Casacuberta E."/>
            <person name="Monfort A."/>
            <person name="Argiriou A."/>
            <person name="Flores M."/>
            <person name="Liguori R."/>
            <person name="Vitale D."/>
            <person name="Mannhaupt G."/>
            <person name="Haase D."/>
            <person name="Schoof H."/>
            <person name="Rudd S."/>
            <person name="Zaccaria P."/>
            <person name="Mewes H.-W."/>
            <person name="Mayer K.F.X."/>
            <person name="Kaul S."/>
            <person name="Town C.D."/>
            <person name="Koo H.L."/>
            <person name="Tallon L.J."/>
            <person name="Jenkins J."/>
            <person name="Rooney T."/>
            <person name="Rizzo M."/>
            <person name="Walts A."/>
            <person name="Utterback T."/>
            <person name="Fujii C.Y."/>
            <person name="Shea T.P."/>
            <person name="Creasy T.H."/>
            <person name="Haas B."/>
            <person name="Maiti R."/>
            <person name="Wu D."/>
            <person name="Peterson J."/>
            <person name="Van Aken S."/>
            <person name="Pai G."/>
            <person name="Militscher J."/>
            <person name="Sellers P."/>
            <person name="Gill J.E."/>
            <person name="Feldblyum T.V."/>
            <person name="Preuss D."/>
            <person name="Lin X."/>
            <person name="Nierman W.C."/>
            <person name="Salzberg S.L."/>
            <person name="White O."/>
            <person name="Venter J.C."/>
            <person name="Fraser C.M."/>
            <person name="Kaneko T."/>
            <person name="Nakamura Y."/>
            <person name="Sato S."/>
            <person name="Kato T."/>
            <person name="Asamizu E."/>
            <person name="Sasamoto S."/>
            <person name="Kimura T."/>
            <person name="Idesawa K."/>
            <person name="Kawashima K."/>
            <person name="Kishida Y."/>
            <person name="Kiyokawa C."/>
            <person name="Kohara M."/>
            <person name="Matsumoto M."/>
            <person name="Matsuno A."/>
            <person name="Muraki A."/>
            <person name="Nakayama S."/>
            <person name="Nakazaki N."/>
            <person name="Shinpo S."/>
            <person name="Takeuchi C."/>
            <person name="Wada T."/>
            <person name="Watanabe A."/>
            <person name="Yamada M."/>
            <person name="Yasuda M."/>
            <person name="Tabata S."/>
        </authorList>
    </citation>
    <scope>NUCLEOTIDE SEQUENCE [LARGE SCALE GENOMIC DNA]</scope>
    <source>
        <strain>cv. Columbia</strain>
    </source>
</reference>
<reference key="2">
    <citation type="journal article" date="2017" name="Plant J.">
        <title>Araport11: a complete reannotation of the Arabidopsis thaliana reference genome.</title>
        <authorList>
            <person name="Cheng C.Y."/>
            <person name="Krishnakumar V."/>
            <person name="Chan A.P."/>
            <person name="Thibaud-Nissen F."/>
            <person name="Schobel S."/>
            <person name="Town C.D."/>
        </authorList>
    </citation>
    <scope>GENOME REANNOTATION</scope>
    <source>
        <strain>cv. Columbia</strain>
    </source>
</reference>
<reference key="3">
    <citation type="submission" date="2006-12" db="EMBL/GenBank/DDBJ databases">
        <title>Arabidopsis ORF clones.</title>
        <authorList>
            <person name="Bautista V.R."/>
            <person name="Kim C.J."/>
            <person name="Chen H."/>
            <person name="Wu S.Y."/>
            <person name="De Los Reyes C."/>
            <person name="Ecker J.R."/>
        </authorList>
    </citation>
    <scope>NUCLEOTIDE SEQUENCE [LARGE SCALE MRNA]</scope>
    <source>
        <strain>cv. Columbia</strain>
    </source>
</reference>
<reference key="4">
    <citation type="journal article" date="2004" name="Gene">
        <title>TDPOZ, a family of bipartite animal and plant proteins that contain the TRAF (TD) and POZ/BTB domains.</title>
        <authorList>
            <person name="Huang C.-J."/>
            <person name="Chen C.-Y."/>
            <person name="Chen H.-H."/>
            <person name="Tsai S.-F."/>
            <person name="Choo K.-B."/>
        </authorList>
    </citation>
    <scope>GENE FAMILY</scope>
</reference>
<reference key="5">
    <citation type="journal article" date="2005" name="Plant Cell">
        <title>Arabidopsis has two redundant Cullin3 proteins that are essential for embryo development and that interact with RBX1 and BTB proteins to form multisubunit E3 ubiquitin ligase complexes in vivo.</title>
        <authorList>
            <person name="Figueroa P."/>
            <person name="Gusmaroli G."/>
            <person name="Serino G."/>
            <person name="Habashi J."/>
            <person name="Ma L."/>
            <person name="Shen Y."/>
            <person name="Feng S."/>
            <person name="Bostick M."/>
            <person name="Callis J."/>
            <person name="Hellmann H."/>
            <person name="Deng X.W."/>
        </authorList>
    </citation>
    <scope>INTERACTION WITH CUL3A</scope>
</reference>
<reference key="6">
    <citation type="journal article" date="2005" name="Plant Physiol.">
        <title>Arabidopsis AtCUL3a and AtCUL3b form complexes with members of the BTB/POZ-MATH protein family.</title>
        <authorList>
            <person name="Weber H."/>
            <person name="Bernhardt A."/>
            <person name="Dieterle M."/>
            <person name="Hano P."/>
            <person name="Mutlu A."/>
            <person name="Estelle M."/>
            <person name="Genschik P."/>
            <person name="Hellmann H."/>
        </authorList>
    </citation>
    <scope>GENE FAMILY</scope>
    <scope>NOMENCLATURE</scope>
    <scope>SUBUNIT</scope>
    <scope>TISSUE SPECIFICITY</scope>
</reference>
<reference key="7">
    <citation type="journal article" date="2009" name="FEBS J.">
        <title>Arabidopsis thaliana BTB/ POZ-MATH proteins interact with members of the ERF/AP2 transcription factor family.</title>
        <authorList>
            <person name="Weber H."/>
            <person name="Hellmann H."/>
        </authorList>
    </citation>
    <scope>INTERACTION WITH RAP2-4</scope>
    <scope>TISSUE SPECIFICITY</scope>
    <scope>SUBCELLULAR LOCATION</scope>
</reference>
<reference key="8">
    <citation type="journal article" date="2014" name="Mol. Plant">
        <title>Identification of Arabidopsis MYB56 as a novel substrate for CRL3BPM E3 ligases.</title>
        <authorList>
            <person name="Chen L."/>
            <person name="Bernhardt A."/>
            <person name="Lee J."/>
            <person name="Hellmann H."/>
        </authorList>
    </citation>
    <scope>INTERACTION WITH MYB56</scope>
    <source>
        <strain>cv. Columbia</strain>
    </source>
</reference>
<comment type="function">
    <text>May act as a substrate-specific adapter of an E3 ubiquitin-protein ligase complex (CUL3-RBX1-BTB) which mediates the ubiquitination and subsequent proteasomal degradation of target proteins.</text>
</comment>
<comment type="pathway">
    <text>Protein modification; protein ubiquitination.</text>
</comment>
<comment type="subunit">
    <text evidence="4 5 6 7">Heterodimer with BPM1. Interacts with RAP2-4. Interacts with CUL3A. Binds to MYB56 at the promoter of FLOWERING LOCUS T (FT) (PubMed:25343985).</text>
</comment>
<comment type="subcellular location">
    <subcellularLocation>
        <location evidence="6">Nucleus</location>
    </subcellularLocation>
    <subcellularLocation>
        <location evidence="6">Cytoplasm</location>
    </subcellularLocation>
</comment>
<comment type="tissue specificity">
    <text evidence="4 6">Ubiquitous.</text>
</comment>
<comment type="domain">
    <text>The BTB/POZ domain mediates the interaction with some component of ubiquitin ligase complexes.</text>
</comment>
<comment type="similarity">
    <text evidence="8">Belongs to the Tdpoz family.</text>
</comment>
<comment type="sequence caution" evidence="8">
    <conflict type="erroneous initiation">
        <sequence resource="EMBL-CDS" id="CAB83071"/>
    </conflict>
    <text>Truncated N-terminus.</text>
</comment>
<dbReference type="EMBL" id="AL138638">
    <property type="protein sequence ID" value="CAB83071.1"/>
    <property type="status" value="ALT_INIT"/>
    <property type="molecule type" value="Genomic_DNA"/>
</dbReference>
<dbReference type="EMBL" id="CP002686">
    <property type="protein sequence ID" value="AEE77819.1"/>
    <property type="molecule type" value="Genomic_DNA"/>
</dbReference>
<dbReference type="EMBL" id="BT029752">
    <property type="protein sequence ID" value="ABM06022.1"/>
    <property type="molecule type" value="mRNA"/>
</dbReference>
<dbReference type="PIR" id="T47406">
    <property type="entry name" value="T47406"/>
</dbReference>
<dbReference type="RefSeq" id="NP_189956.2">
    <property type="nucleotide sequence ID" value="NM_114238.3"/>
</dbReference>
<dbReference type="SMR" id="A1L4W5"/>
<dbReference type="BioGRID" id="8798">
    <property type="interactions" value="5"/>
</dbReference>
<dbReference type="FunCoup" id="A1L4W5">
    <property type="interactions" value="1432"/>
</dbReference>
<dbReference type="IntAct" id="A1L4W5">
    <property type="interactions" value="4"/>
</dbReference>
<dbReference type="MINT" id="A1L4W5"/>
<dbReference type="STRING" id="3702.A1L4W5"/>
<dbReference type="PaxDb" id="3702-AT3G43700.1"/>
<dbReference type="ProteomicsDB" id="240437"/>
<dbReference type="EnsemblPlants" id="AT3G43700.1">
    <property type="protein sequence ID" value="AT3G43700.1"/>
    <property type="gene ID" value="AT3G43700"/>
</dbReference>
<dbReference type="GeneID" id="823478"/>
<dbReference type="Gramene" id="AT3G43700.1">
    <property type="protein sequence ID" value="AT3G43700.1"/>
    <property type="gene ID" value="AT3G43700"/>
</dbReference>
<dbReference type="KEGG" id="ath:AT3G43700"/>
<dbReference type="Araport" id="AT3G43700"/>
<dbReference type="TAIR" id="AT3G43700">
    <property type="gene designation" value="BPM6"/>
</dbReference>
<dbReference type="eggNOG" id="KOG1987">
    <property type="taxonomic scope" value="Eukaryota"/>
</dbReference>
<dbReference type="HOGENOM" id="CLU_004253_2_0_1"/>
<dbReference type="InParanoid" id="A1L4W5"/>
<dbReference type="PhylomeDB" id="A1L4W5"/>
<dbReference type="UniPathway" id="UPA00143"/>
<dbReference type="PRO" id="PR:A1L4W5"/>
<dbReference type="Proteomes" id="UP000006548">
    <property type="component" value="Chromosome 3"/>
</dbReference>
<dbReference type="ExpressionAtlas" id="A1L4W5">
    <property type="expression patterns" value="baseline and differential"/>
</dbReference>
<dbReference type="GO" id="GO:0005829">
    <property type="term" value="C:cytosol"/>
    <property type="evidence" value="ECO:0000314"/>
    <property type="project" value="TAIR"/>
</dbReference>
<dbReference type="GO" id="GO:0005634">
    <property type="term" value="C:nucleus"/>
    <property type="evidence" value="ECO:0000314"/>
    <property type="project" value="TAIR"/>
</dbReference>
<dbReference type="GO" id="GO:0071472">
    <property type="term" value="P:cellular response to salt stress"/>
    <property type="evidence" value="ECO:0000270"/>
    <property type="project" value="TAIR"/>
</dbReference>
<dbReference type="GO" id="GO:0016567">
    <property type="term" value="P:protein ubiquitination"/>
    <property type="evidence" value="ECO:0007669"/>
    <property type="project" value="UniProtKB-UniPathway"/>
</dbReference>
<dbReference type="GO" id="GO:0006970">
    <property type="term" value="P:response to osmotic stress"/>
    <property type="evidence" value="ECO:0000270"/>
    <property type="project" value="TAIR"/>
</dbReference>
<dbReference type="CDD" id="cd14736">
    <property type="entry name" value="BACK_AtBPM-like"/>
    <property type="match status" value="1"/>
</dbReference>
<dbReference type="CDD" id="cd18280">
    <property type="entry name" value="BTB_POZ_BPM_plant"/>
    <property type="match status" value="1"/>
</dbReference>
<dbReference type="CDD" id="cd00121">
    <property type="entry name" value="MATH"/>
    <property type="match status" value="1"/>
</dbReference>
<dbReference type="FunFam" id="3.30.710.10:FF:000136">
    <property type="entry name" value="BTB-POZ and math domain 1"/>
    <property type="match status" value="1"/>
</dbReference>
<dbReference type="Gene3D" id="1.25.40.420">
    <property type="match status" value="1"/>
</dbReference>
<dbReference type="Gene3D" id="2.60.210.10">
    <property type="entry name" value="Apoptosis, Tumor Necrosis Factor Receptor Associated Protein 2, Chain A"/>
    <property type="match status" value="1"/>
</dbReference>
<dbReference type="Gene3D" id="3.30.710.10">
    <property type="entry name" value="Potassium Channel Kv1.1, Chain A"/>
    <property type="match status" value="1"/>
</dbReference>
<dbReference type="InterPro" id="IPR056423">
    <property type="entry name" value="BACK_BPM_SPOP"/>
</dbReference>
<dbReference type="InterPro" id="IPR045005">
    <property type="entry name" value="BPM1-6"/>
</dbReference>
<dbReference type="InterPro" id="IPR034090">
    <property type="entry name" value="BPM_C"/>
</dbReference>
<dbReference type="InterPro" id="IPR000210">
    <property type="entry name" value="BTB/POZ_dom"/>
</dbReference>
<dbReference type="InterPro" id="IPR002083">
    <property type="entry name" value="MATH/TRAF_dom"/>
</dbReference>
<dbReference type="InterPro" id="IPR011333">
    <property type="entry name" value="SKP1/BTB/POZ_sf"/>
</dbReference>
<dbReference type="InterPro" id="IPR008974">
    <property type="entry name" value="TRAF-like"/>
</dbReference>
<dbReference type="PANTHER" id="PTHR26379">
    <property type="entry name" value="BTB/POZ AND MATH DOMAIN-CONTAINING PROTEIN 1"/>
    <property type="match status" value="1"/>
</dbReference>
<dbReference type="PANTHER" id="PTHR26379:SF229">
    <property type="entry name" value="BTB_POZ AND MATH DOMAIN-CONTAINING PROTEIN 5-RELATED"/>
    <property type="match status" value="1"/>
</dbReference>
<dbReference type="Pfam" id="PF24570">
    <property type="entry name" value="BACK_BPM_SPOP"/>
    <property type="match status" value="1"/>
</dbReference>
<dbReference type="Pfam" id="PF00651">
    <property type="entry name" value="BTB"/>
    <property type="match status" value="1"/>
</dbReference>
<dbReference type="Pfam" id="PF22486">
    <property type="entry name" value="MATH_2"/>
    <property type="match status" value="1"/>
</dbReference>
<dbReference type="SMART" id="SM00225">
    <property type="entry name" value="BTB"/>
    <property type="match status" value="1"/>
</dbReference>
<dbReference type="SMART" id="SM00061">
    <property type="entry name" value="MATH"/>
    <property type="match status" value="1"/>
</dbReference>
<dbReference type="SUPFAM" id="SSF54695">
    <property type="entry name" value="POZ domain"/>
    <property type="match status" value="1"/>
</dbReference>
<dbReference type="SUPFAM" id="SSF49599">
    <property type="entry name" value="TRAF domain-like"/>
    <property type="match status" value="1"/>
</dbReference>
<dbReference type="PROSITE" id="PS50097">
    <property type="entry name" value="BTB"/>
    <property type="match status" value="1"/>
</dbReference>
<dbReference type="PROSITE" id="PS50144">
    <property type="entry name" value="MATH"/>
    <property type="match status" value="1"/>
</dbReference>
<evidence type="ECO:0000255" key="1">
    <source>
        <dbReference type="PROSITE-ProRule" id="PRU00037"/>
    </source>
</evidence>
<evidence type="ECO:0000255" key="2">
    <source>
        <dbReference type="PROSITE-ProRule" id="PRU00129"/>
    </source>
</evidence>
<evidence type="ECO:0000256" key="3">
    <source>
        <dbReference type="SAM" id="MobiDB-lite"/>
    </source>
</evidence>
<evidence type="ECO:0000269" key="4">
    <source>
    </source>
</evidence>
<evidence type="ECO:0000269" key="5">
    <source>
    </source>
</evidence>
<evidence type="ECO:0000269" key="6">
    <source>
    </source>
</evidence>
<evidence type="ECO:0000269" key="7">
    <source>
    </source>
</evidence>
<evidence type="ECO:0000305" key="8"/>
<proteinExistence type="evidence at protein level"/>
<protein>
    <recommendedName>
        <fullName>BTB/POZ and MATH domain-containing protein 6</fullName>
    </recommendedName>
    <alternativeName>
        <fullName>Protein BTB-POZ AND MATH DOMAIN 6</fullName>
        <shortName>AtBPM6</shortName>
    </alternativeName>
</protein>
<accession>A1L4W5</accession>
<accession>Q9M2B6</accession>
<sequence>MSKLMTRTSGSSSPNTIPDQIESPTSSRSVTQTTNGSHQFVIQGYSLAKGIGVGKHIASDNFSVGGYQWTIFVYPDGKNPEDNSSYVSVFIVLASECTEVRALFELSLVDQSGKGKHKVHSHFNRSLDGGPYTLKYRGSMWGYKRFFRRSLLETSDYLKDDCLKINCTVGVVVSEMHCPRLLSIHVPDSELGSHFGKLLDTLQGSDVTFDVAGEKFQAHKLVLAARSQFFRSMFYNTLAENNSDVVISDLEPKVFKALLHFMYKDSLPGDVEPLTAHSFDLLRPSEIDDTLIVKLLAAAEMYNLSRLRLLCESHICKGISISSVSKILALSDKYNASELKSVSLKFTAENLAAVLQTKAYEDLKDDCPNLQSELLKAVAGYDDTSSSGGGKSQSVWAQLSNGGETSSRRVRQRTT</sequence>
<keyword id="KW-0963">Cytoplasm</keyword>
<keyword id="KW-0539">Nucleus</keyword>
<keyword id="KW-1185">Reference proteome</keyword>
<keyword id="KW-0833">Ubl conjugation pathway</keyword>
<name>BPM6_ARATH</name>
<feature type="chain" id="PRO_0000405270" description="BTB/POZ and MATH domain-containing protein 6">
    <location>
        <begin position="1"/>
        <end position="415"/>
    </location>
</feature>
<feature type="domain" description="MATH" evidence="2">
    <location>
        <begin position="35"/>
        <end position="169"/>
    </location>
</feature>
<feature type="domain" description="BTB" evidence="1">
    <location>
        <begin position="205"/>
        <end position="271"/>
    </location>
</feature>
<feature type="region of interest" description="Disordered" evidence="3">
    <location>
        <begin position="1"/>
        <end position="33"/>
    </location>
</feature>
<feature type="region of interest" description="Disordered" evidence="3">
    <location>
        <begin position="385"/>
        <end position="415"/>
    </location>
</feature>
<feature type="compositionally biased region" description="Polar residues" evidence="3">
    <location>
        <begin position="392"/>
        <end position="405"/>
    </location>
</feature>
<organism>
    <name type="scientific">Arabidopsis thaliana</name>
    <name type="common">Mouse-ear cress</name>
    <dbReference type="NCBI Taxonomy" id="3702"/>
    <lineage>
        <taxon>Eukaryota</taxon>
        <taxon>Viridiplantae</taxon>
        <taxon>Streptophyta</taxon>
        <taxon>Embryophyta</taxon>
        <taxon>Tracheophyta</taxon>
        <taxon>Spermatophyta</taxon>
        <taxon>Magnoliopsida</taxon>
        <taxon>eudicotyledons</taxon>
        <taxon>Gunneridae</taxon>
        <taxon>Pentapetalae</taxon>
        <taxon>rosids</taxon>
        <taxon>malvids</taxon>
        <taxon>Brassicales</taxon>
        <taxon>Brassicaceae</taxon>
        <taxon>Camelineae</taxon>
        <taxon>Arabidopsis</taxon>
    </lineage>
</organism>